<sequence>MTAINFRNLAHHTIDISSPEVFFVGNNGQGKTNILEVLYLAAYGNSFRTRTESELYATHARSNEYRVKVMYRGEYTHTVQIFSKNGKKRIEKNLKKIRTKKELISSIPCILFFHNDLDFVVGTPERRRFFLDQSLSMCNPLYLEYLQKYHALTKTKNREIKEKRVQLLDALDTQIATVGFDLVQWRTQLVRDFNVIFTKYYERLGDLAQVRIEYKPSWSDSSVEEIVHSLYKRRKHDLAMGMSMSGPHRDKIHFTRSQALFIPQASTGQRRLVSLVLRMSQAVFYTGVTGKLPVLLMDDVLLELDPEKRERFMMSLPPYDQLFCTFLPGEAYRRYGREKTRVYFVSEGACHE</sequence>
<dbReference type="EMBL" id="AE000520">
    <property type="protein sequence ID" value="AAC65001.1"/>
    <property type="status" value="ALT_INIT"/>
    <property type="molecule type" value="Genomic_DNA"/>
</dbReference>
<dbReference type="PIR" id="B71378">
    <property type="entry name" value="B71378"/>
</dbReference>
<dbReference type="SMR" id="O83049"/>
<dbReference type="STRING" id="243276.TP_0003"/>
<dbReference type="EnsemblBacteria" id="AAC65001">
    <property type="protein sequence ID" value="AAC65001"/>
    <property type="gene ID" value="TP_0003"/>
</dbReference>
<dbReference type="KEGG" id="tpa:TP_0003"/>
<dbReference type="eggNOG" id="COG1195">
    <property type="taxonomic scope" value="Bacteria"/>
</dbReference>
<dbReference type="HOGENOM" id="CLU_040267_0_1_12"/>
<dbReference type="Proteomes" id="UP000000811">
    <property type="component" value="Chromosome"/>
</dbReference>
<dbReference type="GO" id="GO:0005737">
    <property type="term" value="C:cytoplasm"/>
    <property type="evidence" value="ECO:0007669"/>
    <property type="project" value="UniProtKB-SubCell"/>
</dbReference>
<dbReference type="GO" id="GO:0005524">
    <property type="term" value="F:ATP binding"/>
    <property type="evidence" value="ECO:0007669"/>
    <property type="project" value="UniProtKB-UniRule"/>
</dbReference>
<dbReference type="GO" id="GO:0003697">
    <property type="term" value="F:single-stranded DNA binding"/>
    <property type="evidence" value="ECO:0007669"/>
    <property type="project" value="UniProtKB-UniRule"/>
</dbReference>
<dbReference type="GO" id="GO:0006260">
    <property type="term" value="P:DNA replication"/>
    <property type="evidence" value="ECO:0007669"/>
    <property type="project" value="UniProtKB-UniRule"/>
</dbReference>
<dbReference type="GO" id="GO:0000731">
    <property type="term" value="P:DNA synthesis involved in DNA repair"/>
    <property type="evidence" value="ECO:0007669"/>
    <property type="project" value="TreeGrafter"/>
</dbReference>
<dbReference type="GO" id="GO:0006302">
    <property type="term" value="P:double-strand break repair"/>
    <property type="evidence" value="ECO:0007669"/>
    <property type="project" value="TreeGrafter"/>
</dbReference>
<dbReference type="GO" id="GO:0009432">
    <property type="term" value="P:SOS response"/>
    <property type="evidence" value="ECO:0007669"/>
    <property type="project" value="UniProtKB-UniRule"/>
</dbReference>
<dbReference type="Gene3D" id="3.40.50.300">
    <property type="entry name" value="P-loop containing nucleotide triphosphate hydrolases"/>
    <property type="match status" value="1"/>
</dbReference>
<dbReference type="Gene3D" id="1.20.1050.90">
    <property type="entry name" value="RecF/RecN/SMC, N-terminal domain"/>
    <property type="match status" value="1"/>
</dbReference>
<dbReference type="HAMAP" id="MF_00365">
    <property type="entry name" value="RecF"/>
    <property type="match status" value="1"/>
</dbReference>
<dbReference type="InterPro" id="IPR001238">
    <property type="entry name" value="DNA-binding_RecF"/>
</dbReference>
<dbReference type="InterPro" id="IPR018078">
    <property type="entry name" value="DNA-binding_RecF_CS"/>
</dbReference>
<dbReference type="InterPro" id="IPR027417">
    <property type="entry name" value="P-loop_NTPase"/>
</dbReference>
<dbReference type="InterPro" id="IPR003395">
    <property type="entry name" value="RecF/RecN/SMC_N"/>
</dbReference>
<dbReference type="InterPro" id="IPR042174">
    <property type="entry name" value="RecF_2"/>
</dbReference>
<dbReference type="NCBIfam" id="TIGR00611">
    <property type="entry name" value="recf"/>
    <property type="match status" value="1"/>
</dbReference>
<dbReference type="PANTHER" id="PTHR32182">
    <property type="entry name" value="DNA REPLICATION AND REPAIR PROTEIN RECF"/>
    <property type="match status" value="1"/>
</dbReference>
<dbReference type="PANTHER" id="PTHR32182:SF0">
    <property type="entry name" value="DNA REPLICATION AND REPAIR PROTEIN RECF"/>
    <property type="match status" value="1"/>
</dbReference>
<dbReference type="Pfam" id="PF02463">
    <property type="entry name" value="SMC_N"/>
    <property type="match status" value="1"/>
</dbReference>
<dbReference type="SUPFAM" id="SSF52540">
    <property type="entry name" value="P-loop containing nucleoside triphosphate hydrolases"/>
    <property type="match status" value="1"/>
</dbReference>
<dbReference type="PROSITE" id="PS00617">
    <property type="entry name" value="RECF_1"/>
    <property type="match status" value="1"/>
</dbReference>
<dbReference type="PROSITE" id="PS00618">
    <property type="entry name" value="RECF_2"/>
    <property type="match status" value="1"/>
</dbReference>
<gene>
    <name type="primary">recF</name>
    <name type="ordered locus">TP_0003</name>
</gene>
<name>RECF_TREPA</name>
<protein>
    <recommendedName>
        <fullName>DNA replication and repair protein RecF</fullName>
    </recommendedName>
</protein>
<keyword id="KW-0067">ATP-binding</keyword>
<keyword id="KW-0963">Cytoplasm</keyword>
<keyword id="KW-0227">DNA damage</keyword>
<keyword id="KW-0234">DNA repair</keyword>
<keyword id="KW-0235">DNA replication</keyword>
<keyword id="KW-0238">DNA-binding</keyword>
<keyword id="KW-0547">Nucleotide-binding</keyword>
<keyword id="KW-1185">Reference proteome</keyword>
<keyword id="KW-0742">SOS response</keyword>
<evidence type="ECO:0000250" key="1"/>
<evidence type="ECO:0000255" key="2"/>
<evidence type="ECO:0000305" key="3"/>
<comment type="function">
    <text evidence="1">The RecF protein is involved in DNA metabolism; it is required for DNA replication and normal SOS inducibility. RecF binds preferentially to single-stranded, linear DNA. It also seems to bind ATP (By similarity).</text>
</comment>
<comment type="subcellular location">
    <subcellularLocation>
        <location evidence="1">Cytoplasm</location>
    </subcellularLocation>
</comment>
<comment type="similarity">
    <text evidence="3">Belongs to the RecF family.</text>
</comment>
<comment type="sequence caution" evidence="3">
    <conflict type="erroneous initiation">
        <sequence resource="EMBL-CDS" id="AAC65001"/>
    </conflict>
</comment>
<reference key="1">
    <citation type="journal article" date="1998" name="Science">
        <title>Complete genome sequence of Treponema pallidum, the syphilis spirochete.</title>
        <authorList>
            <person name="Fraser C.M."/>
            <person name="Norris S.J."/>
            <person name="Weinstock G.M."/>
            <person name="White O."/>
            <person name="Sutton G.G."/>
            <person name="Dodson R.J."/>
            <person name="Gwinn M.L."/>
            <person name="Hickey E.K."/>
            <person name="Clayton R.A."/>
            <person name="Ketchum K.A."/>
            <person name="Sodergren E."/>
            <person name="Hardham J.M."/>
            <person name="McLeod M.P."/>
            <person name="Salzberg S.L."/>
            <person name="Peterson J.D."/>
            <person name="Khalak H.G."/>
            <person name="Richardson D.L."/>
            <person name="Howell J.K."/>
            <person name="Chidambaram M."/>
            <person name="Utterback T.R."/>
            <person name="McDonald L.A."/>
            <person name="Artiach P."/>
            <person name="Bowman C."/>
            <person name="Cotton M.D."/>
            <person name="Fujii C."/>
            <person name="Garland S.A."/>
            <person name="Hatch B."/>
            <person name="Horst K."/>
            <person name="Roberts K.M."/>
            <person name="Sandusky M."/>
            <person name="Weidman J.F."/>
            <person name="Smith H.O."/>
            <person name="Venter J.C."/>
        </authorList>
    </citation>
    <scope>NUCLEOTIDE SEQUENCE [LARGE SCALE GENOMIC DNA]</scope>
    <source>
        <strain>Nichols</strain>
    </source>
</reference>
<proteinExistence type="inferred from homology"/>
<feature type="chain" id="PRO_0000196482" description="DNA replication and repair protein RecF">
    <location>
        <begin position="1"/>
        <end position="352"/>
    </location>
</feature>
<feature type="binding site" evidence="2">
    <location>
        <begin position="25"/>
        <end position="32"/>
    </location>
    <ligand>
        <name>ATP</name>
        <dbReference type="ChEBI" id="CHEBI:30616"/>
    </ligand>
</feature>
<accession>O83049</accession>
<organism>
    <name type="scientific">Treponema pallidum (strain Nichols)</name>
    <dbReference type="NCBI Taxonomy" id="243276"/>
    <lineage>
        <taxon>Bacteria</taxon>
        <taxon>Pseudomonadati</taxon>
        <taxon>Spirochaetota</taxon>
        <taxon>Spirochaetia</taxon>
        <taxon>Spirochaetales</taxon>
        <taxon>Treponemataceae</taxon>
        <taxon>Treponema</taxon>
    </lineage>
</organism>